<keyword id="KW-0025">Alternative splicing</keyword>
<keyword id="KW-0175">Coiled coil</keyword>
<keyword id="KW-0217">Developmental protein</keyword>
<keyword id="KW-0238">DNA-binding</keyword>
<keyword id="KW-0287">Flowering</keyword>
<keyword id="KW-0539">Nucleus</keyword>
<keyword id="KW-1185">Reference proteome</keyword>
<keyword id="KW-0678">Repressor</keyword>
<keyword id="KW-0804">Transcription</keyword>
<keyword id="KW-0805">Transcription regulation</keyword>
<sequence length="252" mass="29698">MGRGKIEIKKIENQTARQVTFSKRRTGLIKKTRELSILCDAHIGLIVFSATGKLSEFCSEQNRMPQLIDRYLHTNGLRLPDHHDDQEQLHHEMELLRRETCNLELRLRPFHGHDLASIPPNELDGLERQLEHSVLKVRERKNELMQQQLENLSRKRRMLEEDNNNMYRWLHEHRAAMEFQQAGIDTKPGEYQQFIEQLQCYKPGEYQQFLEQQQQQPNSVLQLATLPSEIDPTYNLQLAQPNLQNDPTAQND</sequence>
<accession>Q8RYD9</accession>
<accession>Q540P5</accession>
<accession>Q9FMX4</accession>
<comment type="function">
    <text evidence="4 5 6 7 8">Transcription factor involved in the developmental regulation of the endothelium and in the accumulation of proanthocyanidins (PAs) or condensed tannins which give the seed its brown pigmentation after oxidation (PubMed:12368498, PubMed:16080001). Necessary for the normal activation of the BANYULS promoter in the endothelium body (PubMed:12368498). Is required, together with AGL11/STK for the maternal control of endothelium formation, which is essential for female gametophyte development and fertilization, and seed formation (PubMed:22176531). Interacts genetically with AGL1/SHP1 and AGL5/SHP2 in a partially antagonistic manner and represses AGL1/SHP1, AGL5/SHP2, and AGL8/FUL during flower development. Is essential for the coordination of cell divisions in ovule, seed coat development and endosperm formation (PubMed:27776173). Mediates the crosstalk between endothelium and nucellus to ensure proper seed formation. Functions redundantly with AGL63/GOA to repress nucellus growth and promote its degeneration. Represses the negative regulator of autophagy and programmed cell death HVA22D in the proximal nucellus (PubMed:27233529). Binds specifically to the CArG box DNA sequence 5'-CC (A/T)6 GG-3' (PubMed:16080001).</text>
</comment>
<comment type="subunit">
    <text evidence="5">Interacts with AP1/AGL7, SEP1/AGL2, SEP2/AGL4, SEP3/AGL9 and AGL3/SEP4.</text>
</comment>
<comment type="interaction">
    <interactant intactId="EBI-621993">
        <id>Q8RYD9</id>
    </interactant>
    <interactant intactId="EBI-632935">
        <id>P29382</id>
        <label>SEP1</label>
    </interactant>
    <organismsDiffer>false</organismsDiffer>
    <experiments>3</experiments>
</comment>
<comment type="interaction">
    <interactant intactId="EBI-621993">
        <id>Q8RYD9</id>
    </interactant>
    <interactant intactId="EBI-621940">
        <id>Q5XXN7</id>
        <label>SEP1</label>
    </interactant>
    <organismsDiffer>false</organismsDiffer>
    <experiments>4</experiments>
</comment>
<comment type="interaction">
    <interactant intactId="EBI-621993">
        <id>Q8RYD9</id>
    </interactant>
    <interactant intactId="EBI-592020">
        <id>O22456</id>
        <label>SEP3</label>
    </interactant>
    <organismsDiffer>false</organismsDiffer>
    <experiments>7</experiments>
</comment>
<comment type="subcellular location">
    <subcellularLocation>
        <location evidence="2">Nucleus</location>
    </subcellularLocation>
</comment>
<comment type="alternative products">
    <event type="alternative splicing"/>
    <isoform>
        <id>Q8RYD9-1</id>
        <name>1</name>
        <sequence type="displayed"/>
    </isoform>
    <isoform>
        <id>Q8RYD9-2</id>
        <name>2</name>
        <sequence type="described" ref="VSP_006257"/>
    </isoform>
</comment>
<comment type="tissue specificity">
    <text>Expressed in buds, flowers and immature seeds, but not in roots, stems, leaves, seedlings or siliques valves. Expression in seed coat is confined to the endothelium layer.</text>
</comment>
<comment type="developmental stage">
    <text>Expressed during seed development.</text>
</comment>
<comment type="miscellaneous">
    <text>The two isoforms were always coexpressed in the tissues investigated. The pigmentation of the chalaza-micropyle region is not under the control of ABS, as opposed to the pigmentation of the seed body.</text>
</comment>
<comment type="sequence caution" evidence="11">
    <conflict type="erroneous gene model prediction">
        <sequence resource="EMBL-CDS" id="BAB11181"/>
    </conflict>
</comment>
<gene>
    <name type="primary">TT16</name>
    <name type="synonym">ABS</name>
    <name type="synonym">AGL32</name>
    <name type="ordered locus">At5g23260</name>
    <name type="ORF">MKD15.12</name>
</gene>
<name>TT16_ARATH</name>
<reference key="1">
    <citation type="journal article" date="2002" name="Mol. Genet. Genomics">
        <title>A novel MADS-box gene subfamily with sistergroup relationship to class B floral homeotic genes.</title>
        <authorList>
            <person name="Becker A."/>
            <person name="Kaufmann K."/>
            <person name="Freialdenhoven A."/>
            <person name="Vincent C."/>
            <person name="Li M.-A."/>
            <person name="Saedler H."/>
            <person name="Theissen G."/>
        </authorList>
    </citation>
    <scope>NUCLEOTIDE SEQUENCE [MRNA] (ISOFORM 1)</scope>
    <source>
        <strain>cv. Columbia</strain>
        <tissue>Green siliques</tissue>
    </source>
</reference>
<reference key="2">
    <citation type="journal article" date="2003" name="Plant Cell">
        <title>Molecular and phylogenetic analyses of the complete MADS-box transcription factor family in Arabidopsis: new openings to the MADS world.</title>
        <authorList>
            <person name="Parenicova L."/>
            <person name="de Folter S."/>
            <person name="Kieffer M."/>
            <person name="Horner D.S."/>
            <person name="Favalli C."/>
            <person name="Busscher J."/>
            <person name="Cook H.E."/>
            <person name="Ingram R.M."/>
            <person name="Kater M.M."/>
            <person name="Davies B."/>
            <person name="Angenent G.C."/>
            <person name="Colombo L."/>
        </authorList>
    </citation>
    <scope>NUCLEOTIDE SEQUENCE [MRNA] (ISOFORM 2)</scope>
    <scope>GENE FAMILY ORGANIZATION</scope>
    <source>
        <strain>cv. Columbia</strain>
        <tissue>Silique</tissue>
    </source>
</reference>
<reference key="3">
    <citation type="journal article" date="1997" name="DNA Res.">
        <title>Structural analysis of Arabidopsis thaliana chromosome 5. III. Sequence features of the regions of 1,191,918 bp covered by seventeen physically assigned P1 clones.</title>
        <authorList>
            <person name="Nakamura Y."/>
            <person name="Sato S."/>
            <person name="Kaneko T."/>
            <person name="Kotani H."/>
            <person name="Asamizu E."/>
            <person name="Miyajima N."/>
            <person name="Tabata S."/>
        </authorList>
    </citation>
    <scope>NUCLEOTIDE SEQUENCE [LARGE SCALE GENOMIC DNA]</scope>
    <source>
        <strain>cv. Columbia</strain>
    </source>
</reference>
<reference key="4">
    <citation type="journal article" date="2017" name="Plant J.">
        <title>Araport11: a complete reannotation of the Arabidopsis thaliana reference genome.</title>
        <authorList>
            <person name="Cheng C.Y."/>
            <person name="Krishnakumar V."/>
            <person name="Chan A.P."/>
            <person name="Thibaud-Nissen F."/>
            <person name="Schobel S."/>
            <person name="Town C.D."/>
        </authorList>
    </citation>
    <scope>GENOME REANNOTATION</scope>
    <source>
        <strain>cv. Columbia</strain>
    </source>
</reference>
<reference key="5">
    <citation type="submission" date="2007-01" db="EMBL/GenBank/DDBJ databases">
        <title>Arabidopsis ORF clones.</title>
        <authorList>
            <person name="Bautista V.R."/>
            <person name="Kim C.J."/>
            <person name="Chen H."/>
            <person name="Wu S.Y."/>
            <person name="De Los Reyes C."/>
            <person name="Ecker J.R."/>
        </authorList>
    </citation>
    <scope>NUCLEOTIDE SEQUENCE [LARGE SCALE MRNA] (ISOFORM 2)</scope>
    <source>
        <strain>cv. Columbia</strain>
    </source>
</reference>
<reference key="6">
    <citation type="journal article" date="2002" name="Plant Cell">
        <title>The TRANSPARENT TESTA16 locus encodes the ARABIDOPSIS BSISTER MADS domain protein and is required for proper development and pigmentation of the seed coat.</title>
        <authorList>
            <person name="Nesi N."/>
            <person name="Debeaujon I."/>
            <person name="Jond C."/>
            <person name="Stewart A.J."/>
            <person name="Jenkins G.I."/>
            <person name="Caboche M."/>
            <person name="Lepiniec L."/>
        </authorList>
    </citation>
    <scope>CHARACTERIZATION</scope>
    <scope>ALTERNATIVE SPLICING</scope>
</reference>
<reference key="7">
    <citation type="journal article" date="2005" name="Mol. Genet. Genomics">
        <title>Mutant analysis, protein-protein interactions and subcellular localization of the Arabidopsis B sister (ABS) protein.</title>
        <authorList>
            <person name="Kaufmann K."/>
            <person name="Anfang N."/>
            <person name="Saedler H."/>
            <person name="Theissen G."/>
        </authorList>
    </citation>
    <scope>FUNCTION</scope>
    <scope>INTERACTION WITH AP1/AGL7; SEP1/AGL2; SEP2/AGL4; SEP3/AGL9 AND AGL3/SEP4</scope>
</reference>
<reference key="8">
    <citation type="journal article" date="2012" name="Plant J.">
        <title>The MADS box genes SEEDSTICK and ARABIDOPSIS Bsister play a maternal role in fertilization and seed development.</title>
        <authorList>
            <person name="Mizzotti C."/>
            <person name="Mendes M.A."/>
            <person name="Caporali E."/>
            <person name="Schnittger A."/>
            <person name="Kater M.M."/>
            <person name="Battaglia R."/>
            <person name="Colombo L."/>
        </authorList>
    </citation>
    <scope>FUNCTION</scope>
</reference>
<reference key="9">
    <citation type="journal article" date="2016" name="Plant Cell">
        <title>Endosperm and nucellus develop antagonistically in Arabidopsis seeds.</title>
        <authorList>
            <person name="Xu W."/>
            <person name="Fiume E."/>
            <person name="Coen O."/>
            <person name="Pechoux C."/>
            <person name="Lepiniec L."/>
            <person name="Magnani E."/>
        </authorList>
    </citation>
    <scope>FUNCTION</scope>
</reference>
<reference key="10">
    <citation type="journal article" date="2016" name="PLoS ONE">
        <title>The MADS box genes ABS, SHP1, and SHP2 are essential for the coordination of cell divisions in ovule and seed coat development and for endosperm formation in Arabidopsis thaliana.</title>
        <authorList>
            <person name="Ehlers K."/>
            <person name="Bhide A.S."/>
            <person name="Tekleyohans D.G."/>
            <person name="Wittkop B."/>
            <person name="Snowdon R.J."/>
            <person name="Becker A."/>
        </authorList>
    </citation>
    <scope>FUNCTION</scope>
</reference>
<evidence type="ECO:0000255" key="1"/>
<evidence type="ECO:0000255" key="2">
    <source>
        <dbReference type="PROSITE-ProRule" id="PRU00251"/>
    </source>
</evidence>
<evidence type="ECO:0000255" key="3">
    <source>
        <dbReference type="PROSITE-ProRule" id="PRU00629"/>
    </source>
</evidence>
<evidence type="ECO:0000269" key="4">
    <source>
    </source>
</evidence>
<evidence type="ECO:0000269" key="5">
    <source>
    </source>
</evidence>
<evidence type="ECO:0000269" key="6">
    <source>
    </source>
</evidence>
<evidence type="ECO:0000269" key="7">
    <source>
    </source>
</evidence>
<evidence type="ECO:0000269" key="8">
    <source>
    </source>
</evidence>
<evidence type="ECO:0000303" key="9">
    <source>
    </source>
</evidence>
<evidence type="ECO:0000303" key="10">
    <source ref="5"/>
</evidence>
<evidence type="ECO:0000305" key="11"/>
<proteinExistence type="evidence at protein level"/>
<dbReference type="EMBL" id="AJ318098">
    <property type="protein sequence ID" value="CAC85664.1"/>
    <property type="molecule type" value="mRNA"/>
</dbReference>
<dbReference type="EMBL" id="AY141212">
    <property type="protein sequence ID" value="AAN52776.1"/>
    <property type="molecule type" value="mRNA"/>
</dbReference>
<dbReference type="EMBL" id="AB007648">
    <property type="protein sequence ID" value="BAB11181.1"/>
    <property type="status" value="ALT_SEQ"/>
    <property type="molecule type" value="Genomic_DNA"/>
</dbReference>
<dbReference type="EMBL" id="CP002688">
    <property type="protein sequence ID" value="AED93144.1"/>
    <property type="molecule type" value="Genomic_DNA"/>
</dbReference>
<dbReference type="EMBL" id="BT030048">
    <property type="protein sequence ID" value="ABN04786.1"/>
    <property type="molecule type" value="mRNA"/>
</dbReference>
<dbReference type="RefSeq" id="NP_001119264.1">
    <property type="nucleotide sequence ID" value="NM_001125792.1"/>
</dbReference>
<dbReference type="RefSeq" id="NP_974823.1">
    <molecule id="Q8RYD9-1"/>
    <property type="nucleotide sequence ID" value="NM_203094.2"/>
</dbReference>
<dbReference type="SMR" id="Q8RYD9"/>
<dbReference type="BioGRID" id="17665">
    <property type="interactions" value="18"/>
</dbReference>
<dbReference type="FunCoup" id="Q8RYD9">
    <property type="interactions" value="30"/>
</dbReference>
<dbReference type="IntAct" id="Q8RYD9">
    <property type="interactions" value="20"/>
</dbReference>
<dbReference type="STRING" id="3702.Q8RYD9"/>
<dbReference type="PaxDb" id="3702-AT5G23260.2"/>
<dbReference type="ProteomicsDB" id="232402">
    <molecule id="Q8RYD9-1"/>
</dbReference>
<dbReference type="EnsemblPlants" id="AT5G23260.2">
    <molecule id="Q8RYD9-1"/>
    <property type="protein sequence ID" value="AT5G23260.2"/>
    <property type="gene ID" value="AT5G23260"/>
</dbReference>
<dbReference type="GeneID" id="832390"/>
<dbReference type="Gramene" id="AT5G23260.2">
    <molecule id="Q8RYD9-1"/>
    <property type="protein sequence ID" value="AT5G23260.2"/>
    <property type="gene ID" value="AT5G23260"/>
</dbReference>
<dbReference type="KEGG" id="ath:AT5G23260"/>
<dbReference type="Araport" id="AT5G23260"/>
<dbReference type="TAIR" id="AT5G23260">
    <property type="gene designation" value="TT16"/>
</dbReference>
<dbReference type="eggNOG" id="KOG0014">
    <property type="taxonomic scope" value="Eukaryota"/>
</dbReference>
<dbReference type="InParanoid" id="Q8RYD9"/>
<dbReference type="OMA" id="EVERMGM"/>
<dbReference type="OrthoDB" id="1898716at2759"/>
<dbReference type="PhylomeDB" id="Q8RYD9"/>
<dbReference type="PRO" id="PR:Q8RYD9"/>
<dbReference type="Proteomes" id="UP000006548">
    <property type="component" value="Chromosome 5"/>
</dbReference>
<dbReference type="ExpressionAtlas" id="Q8RYD9">
    <property type="expression patterns" value="baseline and differential"/>
</dbReference>
<dbReference type="GO" id="GO:0005634">
    <property type="term" value="C:nucleus"/>
    <property type="evidence" value="ECO:0007669"/>
    <property type="project" value="UniProtKB-SubCell"/>
</dbReference>
<dbReference type="GO" id="GO:0003700">
    <property type="term" value="F:DNA-binding transcription factor activity"/>
    <property type="evidence" value="ECO:0000315"/>
    <property type="project" value="TAIR"/>
</dbReference>
<dbReference type="GO" id="GO:0046983">
    <property type="term" value="F:protein dimerization activity"/>
    <property type="evidence" value="ECO:0007669"/>
    <property type="project" value="InterPro"/>
</dbReference>
<dbReference type="GO" id="GO:0000977">
    <property type="term" value="F:RNA polymerase II transcription regulatory region sequence-specific DNA binding"/>
    <property type="evidence" value="ECO:0007669"/>
    <property type="project" value="InterPro"/>
</dbReference>
<dbReference type="GO" id="GO:0080060">
    <property type="term" value="P:integument development"/>
    <property type="evidence" value="ECO:0000316"/>
    <property type="project" value="TAIR"/>
</dbReference>
<dbReference type="GO" id="GO:0048481">
    <property type="term" value="P:plant ovule development"/>
    <property type="evidence" value="ECO:0000315"/>
    <property type="project" value="TAIR"/>
</dbReference>
<dbReference type="GO" id="GO:0045944">
    <property type="term" value="P:positive regulation of transcription by RNA polymerase II"/>
    <property type="evidence" value="ECO:0007669"/>
    <property type="project" value="InterPro"/>
</dbReference>
<dbReference type="GO" id="GO:0045595">
    <property type="term" value="P:regulation of cell differentiation"/>
    <property type="evidence" value="ECO:0000315"/>
    <property type="project" value="TAIR"/>
</dbReference>
<dbReference type="GO" id="GO:0051302">
    <property type="term" value="P:regulation of cell division"/>
    <property type="evidence" value="ECO:0000316"/>
    <property type="project" value="TAIR"/>
</dbReference>
<dbReference type="GO" id="GO:0008360">
    <property type="term" value="P:regulation of cell shape"/>
    <property type="evidence" value="ECO:0000315"/>
    <property type="project" value="TAIR"/>
</dbReference>
<dbReference type="GO" id="GO:0080155">
    <property type="term" value="P:regulation of double fertilization forming a zygote and endosperm"/>
    <property type="evidence" value="ECO:0000316"/>
    <property type="project" value="TAIR"/>
</dbReference>
<dbReference type="GO" id="GO:2000029">
    <property type="term" value="P:regulation of proanthocyanidin biosynthetic process"/>
    <property type="evidence" value="ECO:0000315"/>
    <property type="project" value="TAIR"/>
</dbReference>
<dbReference type="GO" id="GO:0048316">
    <property type="term" value="P:seed development"/>
    <property type="evidence" value="ECO:0000315"/>
    <property type="project" value="TAIR"/>
</dbReference>
<dbReference type="CDD" id="cd00265">
    <property type="entry name" value="MADS_MEF2_like"/>
    <property type="match status" value="1"/>
</dbReference>
<dbReference type="FunFam" id="3.40.1810.10:FF:000016">
    <property type="entry name" value="MADS-box transcription factor 16"/>
    <property type="match status" value="1"/>
</dbReference>
<dbReference type="Gene3D" id="3.40.1810.10">
    <property type="entry name" value="Transcription factor, MADS-box"/>
    <property type="match status" value="1"/>
</dbReference>
<dbReference type="InterPro" id="IPR050142">
    <property type="entry name" value="MADS-box/MEF2_TF"/>
</dbReference>
<dbReference type="InterPro" id="IPR033896">
    <property type="entry name" value="MEF2-like_N"/>
</dbReference>
<dbReference type="InterPro" id="IPR002487">
    <property type="entry name" value="TF_Kbox"/>
</dbReference>
<dbReference type="InterPro" id="IPR002100">
    <property type="entry name" value="TF_MADSbox"/>
</dbReference>
<dbReference type="InterPro" id="IPR036879">
    <property type="entry name" value="TF_MADSbox_sf"/>
</dbReference>
<dbReference type="PANTHER" id="PTHR48019">
    <property type="entry name" value="SERUM RESPONSE FACTOR HOMOLOG"/>
    <property type="match status" value="1"/>
</dbReference>
<dbReference type="Pfam" id="PF01486">
    <property type="entry name" value="K-box"/>
    <property type="match status" value="1"/>
</dbReference>
<dbReference type="Pfam" id="PF00319">
    <property type="entry name" value="SRF-TF"/>
    <property type="match status" value="1"/>
</dbReference>
<dbReference type="PRINTS" id="PR00404">
    <property type="entry name" value="MADSDOMAIN"/>
</dbReference>
<dbReference type="SMART" id="SM00432">
    <property type="entry name" value="MADS"/>
    <property type="match status" value="1"/>
</dbReference>
<dbReference type="SUPFAM" id="SSF55455">
    <property type="entry name" value="SRF-like"/>
    <property type="match status" value="1"/>
</dbReference>
<dbReference type="PROSITE" id="PS51297">
    <property type="entry name" value="K_BOX"/>
    <property type="match status" value="1"/>
</dbReference>
<dbReference type="PROSITE" id="PS00350">
    <property type="entry name" value="MADS_BOX_1"/>
    <property type="match status" value="1"/>
</dbReference>
<dbReference type="PROSITE" id="PS50066">
    <property type="entry name" value="MADS_BOX_2"/>
    <property type="match status" value="1"/>
</dbReference>
<organism>
    <name type="scientific">Arabidopsis thaliana</name>
    <name type="common">Mouse-ear cress</name>
    <dbReference type="NCBI Taxonomy" id="3702"/>
    <lineage>
        <taxon>Eukaryota</taxon>
        <taxon>Viridiplantae</taxon>
        <taxon>Streptophyta</taxon>
        <taxon>Embryophyta</taxon>
        <taxon>Tracheophyta</taxon>
        <taxon>Spermatophyta</taxon>
        <taxon>Magnoliopsida</taxon>
        <taxon>eudicotyledons</taxon>
        <taxon>Gunneridae</taxon>
        <taxon>Pentapetalae</taxon>
        <taxon>rosids</taxon>
        <taxon>malvids</taxon>
        <taxon>Brassicales</taxon>
        <taxon>Brassicaceae</taxon>
        <taxon>Camelineae</taxon>
        <taxon>Arabidopsis</taxon>
    </lineage>
</organism>
<protein>
    <recommendedName>
        <fullName>Protein TRANSPARENT TESTA 16</fullName>
    </recommendedName>
    <alternativeName>
        <fullName>Arabidopsis BSISTER MADS-box protein</fullName>
    </alternativeName>
</protein>
<feature type="chain" id="PRO_0000199495" description="Protein TRANSPARENT TESTA 16">
    <location>
        <begin position="1"/>
        <end position="252"/>
    </location>
</feature>
<feature type="domain" description="MADS-box" evidence="2">
    <location>
        <begin position="1"/>
        <end position="61"/>
    </location>
</feature>
<feature type="domain" description="K-box" evidence="3">
    <location>
        <begin position="86"/>
        <end position="176"/>
    </location>
</feature>
<feature type="coiled-coil region" evidence="1">
    <location>
        <begin position="121"/>
        <end position="174"/>
    </location>
</feature>
<feature type="splice variant" id="VSP_006257" description="In isoform 2." evidence="9 10">
    <location>
        <begin position="142"/>
        <end position="146"/>
    </location>
</feature>